<organismHost>
    <name type="scientific">Cynomys gunnisoni</name>
    <name type="common">Gunnison's prairie dog</name>
    <name type="synonym">Spermophilus gunnisoni</name>
    <dbReference type="NCBI Taxonomy" id="45479"/>
</organismHost>
<organismHost>
    <name type="scientific">Cynomys leucurus</name>
    <name type="common">White-tailed prairie dog</name>
    <dbReference type="NCBI Taxonomy" id="99825"/>
</organismHost>
<organismHost>
    <name type="scientific">Cynomys ludovicianus</name>
    <name type="common">Black-tailed prairie dog</name>
    <dbReference type="NCBI Taxonomy" id="45480"/>
</organismHost>
<organismHost>
    <name type="scientific">Cynomys mexicanus</name>
    <name type="common">Mexican prairie dog</name>
    <dbReference type="NCBI Taxonomy" id="99826"/>
</organismHost>
<organismHost>
    <name type="scientific">Cynomys parvidens</name>
    <name type="common">Utah prairie dog</name>
    <dbReference type="NCBI Taxonomy" id="99827"/>
</organismHost>
<organismHost>
    <name type="scientific">Gliridae</name>
    <name type="common">dormice</name>
    <dbReference type="NCBI Taxonomy" id="30650"/>
</organismHost>
<organismHost>
    <name type="scientific">Heliosciurus ruwenzorii</name>
    <name type="common">Ruwenzori sun squirrel</name>
    <dbReference type="NCBI Taxonomy" id="226685"/>
</organismHost>
<organismHost>
    <name type="scientific">Homo sapiens</name>
    <name type="common">Human</name>
    <dbReference type="NCBI Taxonomy" id="9606"/>
</organismHost>
<organismHost>
    <name type="scientific">Mus musculus</name>
    <name type="common">Mouse</name>
    <dbReference type="NCBI Taxonomy" id="10090"/>
</organismHost>
<accession>P0DTN3</accession>
<gene>
    <name type="primary">OPG154</name>
    <name type="ORF">MPXVgp139</name>
</gene>
<comment type="function">
    <text evidence="1">Structural protein involved in the envelopment of mature virion (MV) to form the wrapped virion (WV). The wrapping consists of the addition of Golgi membranes to the mature virion. Participates in mature virion (MV) movement within the infected cell. May play an indirect role in MV-cell fusion.</text>
</comment>
<comment type="subunit">
    <text evidence="1">Homohexamers, covalently linked. Interacts with OPG144 and OPG153.</text>
</comment>
<comment type="subcellular location">
    <subcellularLocation>
        <location evidence="1">Virion</location>
    </subcellularLocation>
    <text evidence="1">Located to the mature virion membrane via interaction with protein OPG144.</text>
</comment>
<comment type="similarity">
    <text evidence="2">Belongs to the orthopoxvirus OPG154 protein family.</text>
</comment>
<organism>
    <name type="scientific">Monkeypox virus</name>
    <dbReference type="NCBI Taxonomy" id="10244"/>
    <lineage>
        <taxon>Viruses</taxon>
        <taxon>Varidnaviria</taxon>
        <taxon>Bamfordvirae</taxon>
        <taxon>Nucleocytoviricota</taxon>
        <taxon>Pokkesviricetes</taxon>
        <taxon>Chitovirales</taxon>
        <taxon>Poxviridae</taxon>
        <taxon>Chordopoxvirinae</taxon>
        <taxon>Orthopoxvirus</taxon>
    </lineage>
</organism>
<keyword id="KW-1015">Disulfide bond</keyword>
<keyword id="KW-0597">Phosphoprotein</keyword>
<keyword id="KW-1185">Reference proteome</keyword>
<keyword id="KW-0946">Virion</keyword>
<name>PG154_MONPV</name>
<reference key="1">
    <citation type="journal article" date="2022" name="J. Infect. Dis.">
        <title>Exportation of Monkeypox virus from the African continent.</title>
        <authorList>
            <person name="Mauldin M.R."/>
            <person name="McCollum A.M."/>
            <person name="Nakazawa Y.J."/>
            <person name="Mandra A."/>
            <person name="Whitehouse E.R."/>
            <person name="Davidson W."/>
            <person name="Zhao H."/>
            <person name="Gao J."/>
            <person name="Li Y."/>
            <person name="Doty J."/>
            <person name="Yinka-Ogunleye A."/>
            <person name="Akinpelu A."/>
            <person name="Aruna O."/>
            <person name="Naidoo D."/>
            <person name="Lewandowski K."/>
            <person name="Afrough B."/>
            <person name="Graham V."/>
            <person name="Aarons E."/>
            <person name="Hewson R."/>
            <person name="Vipond R."/>
            <person name="Dunning J."/>
            <person name="Chand M."/>
            <person name="Brown C."/>
            <person name="Cohen-Gihon I."/>
            <person name="Erez N."/>
            <person name="Shifman O."/>
            <person name="Israeli O."/>
            <person name="Sharon M."/>
            <person name="Schwartz E."/>
            <person name="Beth-Din A."/>
            <person name="Zvi A."/>
            <person name="Mak T.M."/>
            <person name="Ng Y.K."/>
            <person name="Cui L."/>
            <person name="Lin R.T.P."/>
            <person name="Olson V.A."/>
            <person name="Brooks T."/>
            <person name="Paran N."/>
            <person name="Ihekweazu C."/>
            <person name="Reynolds M.G."/>
        </authorList>
    </citation>
    <scope>NUCLEOTIDE SEQUENCE [LARGE SCALE GENOMIC DNA]</scope>
    <source>
        <strain>MPXV-M5312_HM12_Rivers</strain>
    </source>
</reference>
<evidence type="ECO:0000250" key="1">
    <source>
        <dbReference type="UniProtKB" id="P11258"/>
    </source>
</evidence>
<evidence type="ECO:0000305" key="2"/>
<protein>
    <recommendedName>
        <fullName>Protein OPG154</fullName>
    </recommendedName>
</protein>
<sequence length="110" mass="12559">MDGTLFPGDDDLAIPATEFFSTKAAKNPETKREAIVKAYGDDNEETLKQRLTNLEKKITNITTKFEQIEKCCKRNDEVLFRLENHAETLRAAMISLAKKIDVQTGRHPYE</sequence>
<dbReference type="EMBL" id="MT903340">
    <property type="status" value="NOT_ANNOTATED_CDS"/>
    <property type="molecule type" value="Genomic_DNA"/>
</dbReference>
<dbReference type="PIR" id="S37281">
    <property type="entry name" value="S37281"/>
</dbReference>
<dbReference type="RefSeq" id="YP_010377135.1">
    <property type="nucleotide sequence ID" value="NC_063383.1"/>
</dbReference>
<dbReference type="SMR" id="P0DTN3"/>
<dbReference type="GeneID" id="72551548"/>
<dbReference type="Proteomes" id="UP000516359">
    <property type="component" value="Genome"/>
</dbReference>
<dbReference type="GO" id="GO:0019031">
    <property type="term" value="C:viral envelope"/>
    <property type="evidence" value="ECO:0007669"/>
    <property type="project" value="InterPro"/>
</dbReference>
<dbReference type="GO" id="GO:0019064">
    <property type="term" value="P:fusion of virus membrane with host plasma membrane"/>
    <property type="evidence" value="ECO:0007669"/>
    <property type="project" value="InterPro"/>
</dbReference>
<dbReference type="Gene3D" id="1.20.5.110">
    <property type="match status" value="1"/>
</dbReference>
<dbReference type="InterPro" id="IPR003436">
    <property type="entry name" value="Chordopox_Fusion/A27"/>
</dbReference>
<dbReference type="Pfam" id="PF02346">
    <property type="entry name" value="Vac_Fusion"/>
    <property type="match status" value="1"/>
</dbReference>
<dbReference type="PRINTS" id="PR01847">
    <property type="entry name" value="VIRALFUSION"/>
</dbReference>
<proteinExistence type="inferred from homology"/>
<feature type="chain" id="PRO_0000457528" description="Protein OPG154">
    <location>
        <begin position="1"/>
        <end position="110"/>
    </location>
</feature>
<feature type="disulfide bond" description="Interchain (with C-441 in A26)" evidence="1">
    <location>
        <position position="71"/>
    </location>
</feature>
<feature type="disulfide bond" description="Interchain (with C-442 in A26)" evidence="1">
    <location>
        <position position="72"/>
    </location>
</feature>